<evidence type="ECO:0000250" key="1"/>
<evidence type="ECO:0000305" key="2"/>
<keyword id="KW-0027">Amidation</keyword>
<keyword id="KW-0165">Cleavage on pair of basic residues</keyword>
<keyword id="KW-0527">Neuropeptide</keyword>
<keyword id="KW-0964">Secreted</keyword>
<keyword id="KW-0732">Signal</keyword>
<reference key="1">
    <citation type="journal article" date="1992" name="Proc. Natl. Acad. Sci. U.S.A.">
        <title>Strong evolutionary conservation of neuropeptide Y: sequences of chicken, goldfish, and Torpedo marmorata DNA clones.</title>
        <authorList>
            <person name="Blomqvist A.G."/>
            <person name="Soederberg C."/>
            <person name="Lundell I."/>
            <person name="Milner R.J."/>
            <person name="Larhammar D."/>
        </authorList>
    </citation>
    <scope>NUCLEOTIDE SEQUENCE [MRNA]</scope>
    <source>
        <tissue>Optic lobe</tissue>
    </source>
</reference>
<feature type="signal peptide" evidence="1">
    <location>
        <begin position="1"/>
        <end position="28"/>
    </location>
</feature>
<feature type="peptide" id="PRO_0000025349" description="Neuropeptide Y">
    <location>
        <begin position="29"/>
        <end position="64"/>
    </location>
</feature>
<feature type="peptide" id="PRO_0000025350" description="C-flanking peptide of NPY">
    <location>
        <begin position="68"/>
        <end position="98"/>
    </location>
</feature>
<feature type="modified residue" description="Tyrosine amide" evidence="1">
    <location>
        <position position="64"/>
    </location>
</feature>
<proteinExistence type="inferred from homology"/>
<sequence>MQTNMKFWLGVFTFAFCMLICIGTFADAYPSKPDNPGEGAPAEDLAKYYSALRHYINLITRQRYGKRSSPEALMMTDLMLRENAESFPKYRYDEPFMW</sequence>
<comment type="function">
    <text>NPY is implicated in the control of feeding and in secretion of gonadotrophin-release hormone.</text>
</comment>
<comment type="subcellular location">
    <subcellularLocation>
        <location>Secreted</location>
    </subcellularLocation>
</comment>
<comment type="similarity">
    <text evidence="2">Belongs to the NPY family.</text>
</comment>
<organism>
    <name type="scientific">Torpedo marmorata</name>
    <name type="common">Marbled electric ray</name>
    <dbReference type="NCBI Taxonomy" id="7788"/>
    <lineage>
        <taxon>Eukaryota</taxon>
        <taxon>Metazoa</taxon>
        <taxon>Chordata</taxon>
        <taxon>Craniata</taxon>
        <taxon>Vertebrata</taxon>
        <taxon>Chondrichthyes</taxon>
        <taxon>Elasmobranchii</taxon>
        <taxon>Batoidea</taxon>
        <taxon>Torpediniformes</taxon>
        <taxon>Torpedinidae</taxon>
        <taxon>Torpedo</taxon>
    </lineage>
</organism>
<name>NPY_TORMA</name>
<protein>
    <recommendedName>
        <fullName>Pro-neuropeptide Y</fullName>
    </recommendedName>
    <component>
        <recommendedName>
            <fullName>Neuropeptide Y</fullName>
        </recommendedName>
        <alternativeName>
            <fullName>Neuropeptide tyrosine</fullName>
            <shortName>NPY</shortName>
        </alternativeName>
    </component>
    <component>
        <recommendedName>
            <fullName>C-flanking peptide of NPY</fullName>
            <shortName>CPON</shortName>
        </recommendedName>
    </component>
</protein>
<gene>
    <name type="primary">npy</name>
</gene>
<accession>P28674</accession>
<dbReference type="EMBL" id="M87296">
    <property type="protein sequence ID" value="AAA49281.1"/>
    <property type="molecule type" value="mRNA"/>
</dbReference>
<dbReference type="PIR" id="C41979">
    <property type="entry name" value="C41979"/>
</dbReference>
<dbReference type="GO" id="GO:0005615">
    <property type="term" value="C:extracellular space"/>
    <property type="evidence" value="ECO:0007669"/>
    <property type="project" value="TreeGrafter"/>
</dbReference>
<dbReference type="GO" id="GO:0005184">
    <property type="term" value="F:neuropeptide hormone activity"/>
    <property type="evidence" value="ECO:0007669"/>
    <property type="project" value="TreeGrafter"/>
</dbReference>
<dbReference type="GO" id="GO:0031841">
    <property type="term" value="F:neuropeptide Y receptor binding"/>
    <property type="evidence" value="ECO:0007669"/>
    <property type="project" value="TreeGrafter"/>
</dbReference>
<dbReference type="GO" id="GO:0007631">
    <property type="term" value="P:feeding behavior"/>
    <property type="evidence" value="ECO:0007669"/>
    <property type="project" value="TreeGrafter"/>
</dbReference>
<dbReference type="GO" id="GO:0007218">
    <property type="term" value="P:neuropeptide signaling pathway"/>
    <property type="evidence" value="ECO:0007669"/>
    <property type="project" value="UniProtKB-KW"/>
</dbReference>
<dbReference type="CDD" id="cd00126">
    <property type="entry name" value="PAH"/>
    <property type="match status" value="1"/>
</dbReference>
<dbReference type="Gene3D" id="6.10.250.900">
    <property type="match status" value="1"/>
</dbReference>
<dbReference type="InterPro" id="IPR001955">
    <property type="entry name" value="Pancreatic_hormone-like"/>
</dbReference>
<dbReference type="InterPro" id="IPR020392">
    <property type="entry name" value="Pancreatic_hormone-like_CS"/>
</dbReference>
<dbReference type="PANTHER" id="PTHR10533">
    <property type="entry name" value="NEUROPEPTIDE Y/PANCREATIC HORMONE/PEPTIDE YY"/>
    <property type="match status" value="1"/>
</dbReference>
<dbReference type="PANTHER" id="PTHR10533:SF5">
    <property type="entry name" value="PRO-NEUROPEPTIDE Y"/>
    <property type="match status" value="1"/>
</dbReference>
<dbReference type="Pfam" id="PF00159">
    <property type="entry name" value="Hormone_3"/>
    <property type="match status" value="1"/>
</dbReference>
<dbReference type="PRINTS" id="PR00278">
    <property type="entry name" value="PANCHORMONE"/>
</dbReference>
<dbReference type="SMART" id="SM00309">
    <property type="entry name" value="PAH"/>
    <property type="match status" value="1"/>
</dbReference>
<dbReference type="PROSITE" id="PS00265">
    <property type="entry name" value="PANCREATIC_HORMONE_1"/>
    <property type="match status" value="1"/>
</dbReference>
<dbReference type="PROSITE" id="PS50276">
    <property type="entry name" value="PANCREATIC_HORMONE_2"/>
    <property type="match status" value="1"/>
</dbReference>